<gene>
    <name type="primary">tat</name>
</gene>
<accession>Q82854</accession>
<accession>Q82853</accession>
<dbReference type="EMBL" id="U21603">
    <property type="protein sequence ID" value="AAA64392.1"/>
    <property type="molecule type" value="Genomic_RNA"/>
</dbReference>
<dbReference type="EMBL" id="U21603">
    <property type="protein sequence ID" value="AAA64395.1"/>
    <property type="molecule type" value="Genomic_RNA"/>
</dbReference>
<dbReference type="RefSeq" id="NP_042686.1">
    <molecule id="Q82854-1"/>
    <property type="nucleotide sequence ID" value="NC_001654.1"/>
</dbReference>
<dbReference type="PDB" id="1ZBN">
    <property type="method" value="NMR"/>
    <property type="chains" value="B=65-81"/>
</dbReference>
<dbReference type="PDBsum" id="1ZBN"/>
<dbReference type="SMR" id="Q82854"/>
<dbReference type="GeneID" id="1497403"/>
<dbReference type="EvolutionaryTrace" id="Q82854"/>
<dbReference type="Proteomes" id="UP000246436">
    <property type="component" value="Genome"/>
</dbReference>
<dbReference type="GO" id="GO:0044196">
    <property type="term" value="C:host cell nucleolus"/>
    <property type="evidence" value="ECO:0007669"/>
    <property type="project" value="UniProtKB-SubCell"/>
</dbReference>
<dbReference type="GO" id="GO:0003723">
    <property type="term" value="F:RNA binding"/>
    <property type="evidence" value="ECO:0007669"/>
    <property type="project" value="UniProtKB-KW"/>
</dbReference>
<dbReference type="GO" id="GO:0001070">
    <property type="term" value="F:RNA-binding transcription regulator activity"/>
    <property type="evidence" value="ECO:0007669"/>
    <property type="project" value="InterPro"/>
</dbReference>
<dbReference type="GO" id="GO:0050434">
    <property type="term" value="P:positive regulation of viral transcription"/>
    <property type="evidence" value="ECO:0007669"/>
    <property type="project" value="InterPro"/>
</dbReference>
<dbReference type="Gene3D" id="4.10.20.10">
    <property type="entry name" value="Tat domain"/>
    <property type="match status" value="1"/>
</dbReference>
<dbReference type="InterPro" id="IPR001831">
    <property type="entry name" value="IV_Tat"/>
</dbReference>
<dbReference type="InterPro" id="IPR036963">
    <property type="entry name" value="Tat_dom_sf"/>
</dbReference>
<dbReference type="Pfam" id="PF00539">
    <property type="entry name" value="Tat"/>
    <property type="match status" value="1"/>
</dbReference>
<feature type="chain" id="PRO_0000272361" description="Protein Tat">
    <location>
        <begin position="1"/>
        <end position="114"/>
    </location>
</feature>
<feature type="region of interest" description="Cysteine-rich" evidence="1">
    <location>
        <begin position="38"/>
        <end position="53"/>
    </location>
</feature>
<feature type="region of interest" description="Core" evidence="1">
    <location>
        <begin position="54"/>
        <end position="65"/>
    </location>
</feature>
<feature type="short sequence motif" description="Nuclear localization signal and RNA-binding (TAR)" evidence="1">
    <location>
        <begin position="66"/>
        <end position="83"/>
    </location>
</feature>
<feature type="splice variant" id="VSP_022398" description="In isoform Short." evidence="2">
    <location>
        <begin position="98"/>
        <end position="114"/>
    </location>
</feature>
<feature type="strand" evidence="3">
    <location>
        <begin position="72"/>
        <end position="76"/>
    </location>
</feature>
<proteinExistence type="evidence at protein level"/>
<protein>
    <recommendedName>
        <fullName>Protein Tat</fullName>
    </recommendedName>
    <alternativeName>
        <fullName>Transactivating regulatory protein</fullName>
    </alternativeName>
    <alternativeName>
        <fullName>jTat</fullName>
    </alternativeName>
</protein>
<sequence length="114" mass="12457">MPGPWATTLTFPGHNGGFGGGPKCWLFWNTCAGPRRVCPKCSCPICVWHCQLCFLQKGLGIRHDGRRKKRGTRGKGRKIHYARSITESGGQRAPNCASSSASCQTWALKHGINC</sequence>
<organism>
    <name type="scientific">Jembrana disease virus</name>
    <name type="common">JDV</name>
    <dbReference type="NCBI Taxonomy" id="36370"/>
    <lineage>
        <taxon>Viruses</taxon>
        <taxon>Riboviria</taxon>
        <taxon>Pararnavirae</taxon>
        <taxon>Artverviricota</taxon>
        <taxon>Revtraviricetes</taxon>
        <taxon>Ortervirales</taxon>
        <taxon>Retroviridae</taxon>
        <taxon>Orthoretrovirinae</taxon>
        <taxon>Lentivirus</taxon>
    </lineage>
</organism>
<name>TAT_JEMBR</name>
<reference key="1">
    <citation type="journal article" date="1995" name="J. Gen. Virol.">
        <title>Nucleotide sequence analysis of Jembrana disease virus: a bovine lentivirus associated with an acute disease syndrome.</title>
        <authorList>
            <person name="Chadwick B.J."/>
            <person name="Coelen R.J."/>
            <person name="Wilcox G.E."/>
            <person name="Sammels L.M."/>
            <person name="Kertayadnya G."/>
        </authorList>
    </citation>
    <scope>NUCLEOTIDE SEQUENCE [GENOMIC RNA] (ISOFORMS LONG AND SHORT)</scope>
    <source>
        <strain>Tabanan/87</strain>
    </source>
</reference>
<reference key="2">
    <citation type="journal article" date="1999" name="J. Virol.">
        <title>Characterization of the Jembrana disease virus tat gene and the cis- and trans-regulatory elements in its long terminal repeats.</title>
        <authorList>
            <person name="Chen H."/>
            <person name="Wilcox G."/>
            <person name="Kertayadnya G."/>
            <person name="Wood C."/>
        </authorList>
    </citation>
    <scope>CHARACTERIZATION</scope>
</reference>
<reference key="3">
    <citation type="journal article" date="2000" name="J. Virol.">
        <title>Jembrana disease virus Tat can regulate human immunodeficiency virus (HIV) long terminal repeat-directed gene expression and can substitute for HIV Tat in viral replication.</title>
        <authorList>
            <person name="Chen H."/>
            <person name="He J."/>
            <person name="Fong S."/>
            <person name="Wilcox G."/>
            <person name="Wood C."/>
        </authorList>
    </citation>
    <scope>BINDING TO HIV TAR RNA</scope>
</reference>
<reference key="4">
    <citation type="journal article" date="2000" name="Mol. Cell">
        <title>An RNA-binding chameleon.</title>
        <authorList>
            <person name="Smith C.A."/>
            <person name="Calabro V."/>
            <person name="Frankel A.D."/>
        </authorList>
    </citation>
    <scope>BINDING TO HIV AND BIV TAR RNA</scope>
</reference>
<reference key="5">
    <citation type="journal article" date="2005" name="Proc. Natl. Acad. Sci. U.S.A.">
        <title>A single intermolecular contact mediates intramolecular stabilization of both RNA and protein.</title>
        <authorList>
            <person name="Calabro V."/>
            <person name="Daugherty M.D."/>
            <person name="Frankel A.D."/>
        </authorList>
    </citation>
    <scope>STRUCTURE BY NMR OF 65-81 IN COMPLEX WITH BIV TAR RNA</scope>
</reference>
<organismHost>
    <name type="scientific">Bos javanicus</name>
    <name type="common">Wild banteng</name>
    <dbReference type="NCBI Taxonomy" id="9906"/>
</organismHost>
<comment type="function">
    <text evidence="1">Nuclear transcriptional activator of viral gene expression, that is essential for viral transcription from the LTR promoter and replication. Acts as a sequence-specific molecular adapter, directing components of the cellular transcription machinery to the viral RNA to promote processive transcription elongation by the RNA polymerase II (RNA pol II) complex, thereby increasing the level of full-length transcripts. Tat binds to a hairpin structure at the 5'-end of all nascent viral mRNAs referred to as the transactivation responsive RNA element (TAR RNA) in a CCNT1-independent mode. Tat then recruits the CCNT1/cyclin-T1 component of the P-TEFb complex (CDK9 and CCNT1), which promotes RNA chain elongation. The CDK9 component of P-TEFb hyperphosphorylates the C-terminus of RNA Pol II that becomes stabilized and much more processive (By similarity).</text>
</comment>
<comment type="subunit">
    <text evidence="1">Binds to bovine CCNT1/cyclin-T1.</text>
</comment>
<comment type="subcellular location">
    <subcellularLocation>
        <location evidence="1">Host nucleus</location>
        <location evidence="1">Host nucleolus</location>
    </subcellularLocation>
</comment>
<comment type="alternative products">
    <event type="alternative splicing"/>
    <isoform>
        <id>Q82854-1</id>
        <name>Long</name>
        <sequence type="displayed"/>
    </isoform>
    <isoform>
        <id>Q82854-2</id>
        <name>Short</name>
        <sequence type="described" ref="VSP_022398"/>
    </isoform>
</comment>
<comment type="miscellaneous">
    <text>Also binds to BIV and HIV TAR RNAs.</text>
</comment>
<comment type="similarity">
    <text evidence="2">Belongs to the lentiviruses Tat family.</text>
</comment>
<evidence type="ECO:0000250" key="1"/>
<evidence type="ECO:0000305" key="2"/>
<evidence type="ECO:0007829" key="3">
    <source>
        <dbReference type="PDB" id="1ZBN"/>
    </source>
</evidence>
<keyword id="KW-0002">3D-structure</keyword>
<keyword id="KW-0010">Activator</keyword>
<keyword id="KW-0025">Alternative splicing</keyword>
<keyword id="KW-1048">Host nucleus</keyword>
<keyword id="KW-0945">Host-virus interaction</keyword>
<keyword id="KW-1185">Reference proteome</keyword>
<keyword id="KW-0694">RNA-binding</keyword>
<keyword id="KW-0804">Transcription</keyword>
<keyword id="KW-0805">Transcription regulation</keyword>